<name>PLP8_ARATH</name>
<protein>
    <recommendedName>
        <fullName>Patatin-like protein 8</fullName>
        <shortName>AtPLP8</shortName>
        <ecNumber>3.1.1.-</ecNumber>
    </recommendedName>
    <alternativeName>
        <fullName>Patatin-related phospholipase A IIIgamma</fullName>
        <shortName>pPLAIIIg</shortName>
    </alternativeName>
    <alternativeName>
        <fullName>Phospholipase A IVD</fullName>
        <shortName>AtPLAIVD</shortName>
    </alternativeName>
</protein>
<evidence type="ECO:0000250" key="1"/>
<evidence type="ECO:0000255" key="2"/>
<evidence type="ECO:0000255" key="3">
    <source>
        <dbReference type="PROSITE-ProRule" id="PRU01161"/>
    </source>
</evidence>
<evidence type="ECO:0000256" key="4">
    <source>
        <dbReference type="SAM" id="MobiDB-lite"/>
    </source>
</evidence>
<evidence type="ECO:0000269" key="5">
    <source>
    </source>
</evidence>
<evidence type="ECO:0000305" key="6"/>
<dbReference type="EC" id="3.1.1.-"/>
<dbReference type="EMBL" id="AL050352">
    <property type="protein sequence ID" value="CAB43655.1"/>
    <property type="molecule type" value="Genomic_DNA"/>
</dbReference>
<dbReference type="EMBL" id="AL161575">
    <property type="protein sequence ID" value="CAB79738.1"/>
    <property type="molecule type" value="Genomic_DNA"/>
</dbReference>
<dbReference type="EMBL" id="CP002687">
    <property type="protein sequence ID" value="AEE85677.1"/>
    <property type="molecule type" value="Genomic_DNA"/>
</dbReference>
<dbReference type="EMBL" id="CP002687">
    <property type="protein sequence ID" value="AEE85678.1"/>
    <property type="molecule type" value="Genomic_DNA"/>
</dbReference>
<dbReference type="EMBL" id="BT000869">
    <property type="protein sequence ID" value="AAN41269.1"/>
    <property type="molecule type" value="mRNA"/>
</dbReference>
<dbReference type="EMBL" id="BX828321">
    <property type="status" value="NOT_ANNOTATED_CDS"/>
    <property type="molecule type" value="mRNA"/>
</dbReference>
<dbReference type="PIR" id="T08541">
    <property type="entry name" value="T08541"/>
</dbReference>
<dbReference type="RefSeq" id="NP_001190866.1">
    <molecule id="Q8H133-2"/>
    <property type="nucleotide sequence ID" value="NM_001203937.2"/>
</dbReference>
<dbReference type="RefSeq" id="NP_194709.2">
    <molecule id="Q8H133-1"/>
    <property type="nucleotide sequence ID" value="NM_119126.3"/>
</dbReference>
<dbReference type="SMR" id="Q8H133"/>
<dbReference type="BioGRID" id="14389">
    <property type="interactions" value="5"/>
</dbReference>
<dbReference type="FunCoup" id="Q8H133">
    <property type="interactions" value="69"/>
</dbReference>
<dbReference type="IntAct" id="Q8H133">
    <property type="interactions" value="5"/>
</dbReference>
<dbReference type="STRING" id="3702.Q8H133"/>
<dbReference type="iPTMnet" id="Q8H133"/>
<dbReference type="PaxDb" id="3702-AT4G29800.2"/>
<dbReference type="ProteomicsDB" id="234972">
    <molecule id="Q8H133-1"/>
</dbReference>
<dbReference type="EnsemblPlants" id="AT4G29800.1">
    <molecule id="Q8H133-1"/>
    <property type="protein sequence ID" value="AT4G29800.1"/>
    <property type="gene ID" value="AT4G29800"/>
</dbReference>
<dbReference type="EnsemblPlants" id="AT4G29800.2">
    <molecule id="Q8H133-2"/>
    <property type="protein sequence ID" value="AT4G29800.2"/>
    <property type="gene ID" value="AT4G29800"/>
</dbReference>
<dbReference type="GeneID" id="829102"/>
<dbReference type="Gramene" id="AT4G29800.1">
    <molecule id="Q8H133-1"/>
    <property type="protein sequence ID" value="AT4G29800.1"/>
    <property type="gene ID" value="AT4G29800"/>
</dbReference>
<dbReference type="Gramene" id="AT4G29800.2">
    <molecule id="Q8H133-2"/>
    <property type="protein sequence ID" value="AT4G29800.2"/>
    <property type="gene ID" value="AT4G29800"/>
</dbReference>
<dbReference type="KEGG" id="ath:AT4G29800"/>
<dbReference type="Araport" id="AT4G29800"/>
<dbReference type="TAIR" id="AT4G29800">
    <property type="gene designation" value="PLP8"/>
</dbReference>
<dbReference type="eggNOG" id="KOG0513">
    <property type="taxonomic scope" value="Eukaryota"/>
</dbReference>
<dbReference type="InParanoid" id="Q8H133"/>
<dbReference type="OMA" id="HKLWIPQ"/>
<dbReference type="PhylomeDB" id="Q8H133"/>
<dbReference type="BRENDA" id="3.1.1.23">
    <property type="organism ID" value="399"/>
</dbReference>
<dbReference type="PRO" id="PR:Q8H133"/>
<dbReference type="Proteomes" id="UP000006548">
    <property type="component" value="Chromosome 4"/>
</dbReference>
<dbReference type="ExpressionAtlas" id="Q8H133">
    <property type="expression patterns" value="baseline and differential"/>
</dbReference>
<dbReference type="GO" id="GO:0016787">
    <property type="term" value="F:hydrolase activity"/>
    <property type="evidence" value="ECO:0007669"/>
    <property type="project" value="UniProtKB-KW"/>
</dbReference>
<dbReference type="GO" id="GO:0006952">
    <property type="term" value="P:defense response"/>
    <property type="evidence" value="ECO:0007669"/>
    <property type="project" value="UniProtKB-KW"/>
</dbReference>
<dbReference type="GO" id="GO:0016042">
    <property type="term" value="P:lipid catabolic process"/>
    <property type="evidence" value="ECO:0007669"/>
    <property type="project" value="UniProtKB-KW"/>
</dbReference>
<dbReference type="Gene3D" id="3.40.1090.10">
    <property type="entry name" value="Cytosolic phospholipase A2 catalytic domain"/>
    <property type="match status" value="1"/>
</dbReference>
<dbReference type="InterPro" id="IPR016035">
    <property type="entry name" value="Acyl_Trfase/lysoPLipase"/>
</dbReference>
<dbReference type="InterPro" id="IPR002641">
    <property type="entry name" value="PNPLA_dom"/>
</dbReference>
<dbReference type="PANTHER" id="PTHR32241">
    <property type="entry name" value="PATATIN-LIKE PROTEIN 6"/>
    <property type="match status" value="1"/>
</dbReference>
<dbReference type="PANTHER" id="PTHR32241:SF25">
    <property type="entry name" value="PATATIN-LIKE PROTEIN 8"/>
    <property type="match status" value="1"/>
</dbReference>
<dbReference type="Pfam" id="PF01734">
    <property type="entry name" value="Patatin"/>
    <property type="match status" value="1"/>
</dbReference>
<dbReference type="SUPFAM" id="SSF52151">
    <property type="entry name" value="FabD/lysophospholipase-like"/>
    <property type="match status" value="1"/>
</dbReference>
<dbReference type="PROSITE" id="PS51635">
    <property type="entry name" value="PNPLA"/>
    <property type="match status" value="1"/>
</dbReference>
<gene>
    <name type="primary">PLP8</name>
    <name type="ordered locus">At4g29800</name>
    <name type="ORF">F27B13.40</name>
</gene>
<organism>
    <name type="scientific">Arabidopsis thaliana</name>
    <name type="common">Mouse-ear cress</name>
    <dbReference type="NCBI Taxonomy" id="3702"/>
    <lineage>
        <taxon>Eukaryota</taxon>
        <taxon>Viridiplantae</taxon>
        <taxon>Streptophyta</taxon>
        <taxon>Embryophyta</taxon>
        <taxon>Tracheophyta</taxon>
        <taxon>Spermatophyta</taxon>
        <taxon>Magnoliopsida</taxon>
        <taxon>eudicotyledons</taxon>
        <taxon>Gunneridae</taxon>
        <taxon>Pentapetalae</taxon>
        <taxon>rosids</taxon>
        <taxon>malvids</taxon>
        <taxon>Brassicales</taxon>
        <taxon>Brassicaceae</taxon>
        <taxon>Camelineae</taxon>
        <taxon>Arabidopsis</taxon>
    </lineage>
</organism>
<sequence>MNRRYEKPPPLSVSSKGKKKHFVNHTAPNTPGNYERTQTSPTLSTARSHEPDDKLNYEIFSILESKFLFGYEDPRLLWIPQSPLRPGDSEAGPSPRSPLTPNGVVLPGTPSSSFRSPRGRICVLSIDGGGMRGLLAGKSLIYLEQMLKEKSGDPNARIADYFDVAAGSGVGGVFAAMIFATRDGNRPIFKAEDTWKFLVENAEGFYRSGSGSGGGGAGAAIKRVIRSGSGSGSSSVTAATAKLEKAMKASFADLTLKDTLKPILISCYDLSSTAPFLFSRADALESDSFDFRLRDICRATWAEPGTFDPVRTCSVDGKTRCVAVGGGLAMSNPTAAAITHVFHNKQEFPAVKGVEDLLVLSLGTGQLFEVNYDYEQVKNWRVKEWARPMARISGDGSAEFVDQAVAMGFGPYRSSNYVRIQANGSRLGACGPNVDTDPRAENVKKLTEIADEMLKQNNVESVLFGSKRIGEMSNSEKIEWFASELVIEQQRRSVRASPTVTLKQAVSKTNRNAINATLTLISKDR</sequence>
<reference key="1">
    <citation type="journal article" date="1999" name="Nature">
        <title>Sequence and analysis of chromosome 4 of the plant Arabidopsis thaliana.</title>
        <authorList>
            <person name="Mayer K.F.X."/>
            <person name="Schueller C."/>
            <person name="Wambutt R."/>
            <person name="Murphy G."/>
            <person name="Volckaert G."/>
            <person name="Pohl T."/>
            <person name="Duesterhoeft A."/>
            <person name="Stiekema W."/>
            <person name="Entian K.-D."/>
            <person name="Terryn N."/>
            <person name="Harris B."/>
            <person name="Ansorge W."/>
            <person name="Brandt P."/>
            <person name="Grivell L.A."/>
            <person name="Rieger M."/>
            <person name="Weichselgartner M."/>
            <person name="de Simone V."/>
            <person name="Obermaier B."/>
            <person name="Mache R."/>
            <person name="Mueller M."/>
            <person name="Kreis M."/>
            <person name="Delseny M."/>
            <person name="Puigdomenech P."/>
            <person name="Watson M."/>
            <person name="Schmidtheini T."/>
            <person name="Reichert B."/>
            <person name="Portetelle D."/>
            <person name="Perez-Alonso M."/>
            <person name="Boutry M."/>
            <person name="Bancroft I."/>
            <person name="Vos P."/>
            <person name="Hoheisel J."/>
            <person name="Zimmermann W."/>
            <person name="Wedler H."/>
            <person name="Ridley P."/>
            <person name="Langham S.-A."/>
            <person name="McCullagh B."/>
            <person name="Bilham L."/>
            <person name="Robben J."/>
            <person name="van der Schueren J."/>
            <person name="Grymonprez B."/>
            <person name="Chuang Y.-J."/>
            <person name="Vandenbussche F."/>
            <person name="Braeken M."/>
            <person name="Weltjens I."/>
            <person name="Voet M."/>
            <person name="Bastiaens I."/>
            <person name="Aert R."/>
            <person name="Defoor E."/>
            <person name="Weitzenegger T."/>
            <person name="Bothe G."/>
            <person name="Ramsperger U."/>
            <person name="Hilbert H."/>
            <person name="Braun M."/>
            <person name="Holzer E."/>
            <person name="Brandt A."/>
            <person name="Peters S."/>
            <person name="van Staveren M."/>
            <person name="Dirkse W."/>
            <person name="Mooijman P."/>
            <person name="Klein Lankhorst R."/>
            <person name="Rose M."/>
            <person name="Hauf J."/>
            <person name="Koetter P."/>
            <person name="Berneiser S."/>
            <person name="Hempel S."/>
            <person name="Feldpausch M."/>
            <person name="Lamberth S."/>
            <person name="Van den Daele H."/>
            <person name="De Keyser A."/>
            <person name="Buysshaert C."/>
            <person name="Gielen J."/>
            <person name="Villarroel R."/>
            <person name="De Clercq R."/>
            <person name="van Montagu M."/>
            <person name="Rogers J."/>
            <person name="Cronin A."/>
            <person name="Quail M.A."/>
            <person name="Bray-Allen S."/>
            <person name="Clark L."/>
            <person name="Doggett J."/>
            <person name="Hall S."/>
            <person name="Kay M."/>
            <person name="Lennard N."/>
            <person name="McLay K."/>
            <person name="Mayes R."/>
            <person name="Pettett A."/>
            <person name="Rajandream M.A."/>
            <person name="Lyne M."/>
            <person name="Benes V."/>
            <person name="Rechmann S."/>
            <person name="Borkova D."/>
            <person name="Bloecker H."/>
            <person name="Scharfe M."/>
            <person name="Grimm M."/>
            <person name="Loehnert T.-H."/>
            <person name="Dose S."/>
            <person name="de Haan M."/>
            <person name="Maarse A.C."/>
            <person name="Schaefer M."/>
            <person name="Mueller-Auer S."/>
            <person name="Gabel C."/>
            <person name="Fuchs M."/>
            <person name="Fartmann B."/>
            <person name="Granderath K."/>
            <person name="Dauner D."/>
            <person name="Herzl A."/>
            <person name="Neumann S."/>
            <person name="Argiriou A."/>
            <person name="Vitale D."/>
            <person name="Liguori R."/>
            <person name="Piravandi E."/>
            <person name="Massenet O."/>
            <person name="Quigley F."/>
            <person name="Clabauld G."/>
            <person name="Muendlein A."/>
            <person name="Felber R."/>
            <person name="Schnabl S."/>
            <person name="Hiller R."/>
            <person name="Schmidt W."/>
            <person name="Lecharny A."/>
            <person name="Aubourg S."/>
            <person name="Chefdor F."/>
            <person name="Cooke R."/>
            <person name="Berger C."/>
            <person name="Monfort A."/>
            <person name="Casacuberta E."/>
            <person name="Gibbons T."/>
            <person name="Weber N."/>
            <person name="Vandenbol M."/>
            <person name="Bargues M."/>
            <person name="Terol J."/>
            <person name="Torres A."/>
            <person name="Perez-Perez A."/>
            <person name="Purnelle B."/>
            <person name="Bent E."/>
            <person name="Johnson S."/>
            <person name="Tacon D."/>
            <person name="Jesse T."/>
            <person name="Heijnen L."/>
            <person name="Schwarz S."/>
            <person name="Scholler P."/>
            <person name="Heber S."/>
            <person name="Francs P."/>
            <person name="Bielke C."/>
            <person name="Frishman D."/>
            <person name="Haase D."/>
            <person name="Lemcke K."/>
            <person name="Mewes H.-W."/>
            <person name="Stocker S."/>
            <person name="Zaccaria P."/>
            <person name="Bevan M."/>
            <person name="Wilson R.K."/>
            <person name="de la Bastide M."/>
            <person name="Habermann K."/>
            <person name="Parnell L."/>
            <person name="Dedhia N."/>
            <person name="Gnoj L."/>
            <person name="Schutz K."/>
            <person name="Huang E."/>
            <person name="Spiegel L."/>
            <person name="Sekhon M."/>
            <person name="Murray J."/>
            <person name="Sheet P."/>
            <person name="Cordes M."/>
            <person name="Abu-Threideh J."/>
            <person name="Stoneking T."/>
            <person name="Kalicki J."/>
            <person name="Graves T."/>
            <person name="Harmon G."/>
            <person name="Edwards J."/>
            <person name="Latreille P."/>
            <person name="Courtney L."/>
            <person name="Cloud J."/>
            <person name="Abbott A."/>
            <person name="Scott K."/>
            <person name="Johnson D."/>
            <person name="Minx P."/>
            <person name="Bentley D."/>
            <person name="Fulton B."/>
            <person name="Miller N."/>
            <person name="Greco T."/>
            <person name="Kemp K."/>
            <person name="Kramer J."/>
            <person name="Fulton L."/>
            <person name="Mardis E."/>
            <person name="Dante M."/>
            <person name="Pepin K."/>
            <person name="Hillier L.W."/>
            <person name="Nelson J."/>
            <person name="Spieth J."/>
            <person name="Ryan E."/>
            <person name="Andrews S."/>
            <person name="Geisel C."/>
            <person name="Layman D."/>
            <person name="Du H."/>
            <person name="Ali J."/>
            <person name="Berghoff A."/>
            <person name="Jones K."/>
            <person name="Drone K."/>
            <person name="Cotton M."/>
            <person name="Joshu C."/>
            <person name="Antonoiu B."/>
            <person name="Zidanic M."/>
            <person name="Strong C."/>
            <person name="Sun H."/>
            <person name="Lamar B."/>
            <person name="Yordan C."/>
            <person name="Ma P."/>
            <person name="Zhong J."/>
            <person name="Preston R."/>
            <person name="Vil D."/>
            <person name="Shekher M."/>
            <person name="Matero A."/>
            <person name="Shah R."/>
            <person name="Swaby I.K."/>
            <person name="O'Shaughnessy A."/>
            <person name="Rodriguez M."/>
            <person name="Hoffman J."/>
            <person name="Till S."/>
            <person name="Granat S."/>
            <person name="Shohdy N."/>
            <person name="Hasegawa A."/>
            <person name="Hameed A."/>
            <person name="Lodhi M."/>
            <person name="Johnson A."/>
            <person name="Chen E."/>
            <person name="Marra M.A."/>
            <person name="Martienssen R."/>
            <person name="McCombie W.R."/>
        </authorList>
    </citation>
    <scope>NUCLEOTIDE SEQUENCE [LARGE SCALE GENOMIC DNA]</scope>
    <source>
        <strain>cv. Columbia</strain>
    </source>
</reference>
<reference key="2">
    <citation type="journal article" date="2017" name="Plant J.">
        <title>Araport11: a complete reannotation of the Arabidopsis thaliana reference genome.</title>
        <authorList>
            <person name="Cheng C.Y."/>
            <person name="Krishnakumar V."/>
            <person name="Chan A.P."/>
            <person name="Thibaud-Nissen F."/>
            <person name="Schobel S."/>
            <person name="Town C.D."/>
        </authorList>
    </citation>
    <scope>GENOME REANNOTATION</scope>
    <source>
        <strain>cv. Columbia</strain>
    </source>
</reference>
<reference key="3">
    <citation type="journal article" date="2003" name="Science">
        <title>Empirical analysis of transcriptional activity in the Arabidopsis genome.</title>
        <authorList>
            <person name="Yamada K."/>
            <person name="Lim J."/>
            <person name="Dale J.M."/>
            <person name="Chen H."/>
            <person name="Shinn P."/>
            <person name="Palm C.J."/>
            <person name="Southwick A.M."/>
            <person name="Wu H.C."/>
            <person name="Kim C.J."/>
            <person name="Nguyen M."/>
            <person name="Pham P.K."/>
            <person name="Cheuk R.F."/>
            <person name="Karlin-Newmann G."/>
            <person name="Liu S.X."/>
            <person name="Lam B."/>
            <person name="Sakano H."/>
            <person name="Wu T."/>
            <person name="Yu G."/>
            <person name="Miranda M."/>
            <person name="Quach H.L."/>
            <person name="Tripp M."/>
            <person name="Chang C.H."/>
            <person name="Lee J.M."/>
            <person name="Toriumi M.J."/>
            <person name="Chan M.M."/>
            <person name="Tang C.C."/>
            <person name="Onodera C.S."/>
            <person name="Deng J.M."/>
            <person name="Akiyama K."/>
            <person name="Ansari Y."/>
            <person name="Arakawa T."/>
            <person name="Banh J."/>
            <person name="Banno F."/>
            <person name="Bowser L."/>
            <person name="Brooks S.Y."/>
            <person name="Carninci P."/>
            <person name="Chao Q."/>
            <person name="Choy N."/>
            <person name="Enju A."/>
            <person name="Goldsmith A.D."/>
            <person name="Gurjal M."/>
            <person name="Hansen N.F."/>
            <person name="Hayashizaki Y."/>
            <person name="Johnson-Hopson C."/>
            <person name="Hsuan V.W."/>
            <person name="Iida K."/>
            <person name="Karnes M."/>
            <person name="Khan S."/>
            <person name="Koesema E."/>
            <person name="Ishida J."/>
            <person name="Jiang P.X."/>
            <person name="Jones T."/>
            <person name="Kawai J."/>
            <person name="Kamiya A."/>
            <person name="Meyers C."/>
            <person name="Nakajima M."/>
            <person name="Narusaka M."/>
            <person name="Seki M."/>
            <person name="Sakurai T."/>
            <person name="Satou M."/>
            <person name="Tamse R."/>
            <person name="Vaysberg M."/>
            <person name="Wallender E.K."/>
            <person name="Wong C."/>
            <person name="Yamamura Y."/>
            <person name="Yuan S."/>
            <person name="Shinozaki K."/>
            <person name="Davis R.W."/>
            <person name="Theologis A."/>
            <person name="Ecker J.R."/>
        </authorList>
    </citation>
    <scope>NUCLEOTIDE SEQUENCE [LARGE SCALE MRNA]</scope>
    <source>
        <strain>cv. Columbia</strain>
    </source>
</reference>
<reference key="4">
    <citation type="journal article" date="2004" name="Genome Res.">
        <title>Whole genome sequence comparisons and 'full-length' cDNA sequences: a combined approach to evaluate and improve Arabidopsis genome annotation.</title>
        <authorList>
            <person name="Castelli V."/>
            <person name="Aury J.-M."/>
            <person name="Jaillon O."/>
            <person name="Wincker P."/>
            <person name="Clepet C."/>
            <person name="Menard M."/>
            <person name="Cruaud C."/>
            <person name="Quetier F."/>
            <person name="Scarpelli C."/>
            <person name="Schaechter V."/>
            <person name="Temple G."/>
            <person name="Caboche M."/>
            <person name="Weissenbach J."/>
            <person name="Salanoubat M."/>
        </authorList>
    </citation>
    <scope>NUCLEOTIDE SEQUENCE [LARGE SCALE MRNA]</scope>
    <source>
        <strain>cv. Columbia</strain>
    </source>
</reference>
<reference key="5">
    <citation type="journal article" date="2011" name="Plant Cell">
        <title>Patatin-related phospholipase pPLAIIIbeta-induced changes in lipid metabolism alter cellulose content and cell elongation in Arabidopsis.</title>
        <authorList>
            <person name="Li M."/>
            <person name="Bahn S.C."/>
            <person name="Guo L."/>
            <person name="Musgrave W."/>
            <person name="Berg H."/>
            <person name="Welti R."/>
            <person name="Wang X."/>
        </authorList>
    </citation>
    <scope>TISSUE SPECIFICITY</scope>
</reference>
<accession>Q8H133</accession>
<accession>Q9SZQ3</accession>
<keyword id="KW-0025">Alternative splicing</keyword>
<keyword id="KW-0378">Hydrolase</keyword>
<keyword id="KW-0442">Lipid degradation</keyword>
<keyword id="KW-0443">Lipid metabolism</keyword>
<keyword id="KW-0611">Plant defense</keyword>
<keyword id="KW-1185">Reference proteome</keyword>
<feature type="chain" id="PRO_0000425820" description="Patatin-like protein 8">
    <location>
        <begin position="1"/>
        <end position="525"/>
    </location>
</feature>
<feature type="domain" description="PNPLA" evidence="3">
    <location>
        <begin position="124"/>
        <end position="338"/>
    </location>
</feature>
<feature type="region of interest" description="Disordered" evidence="4">
    <location>
        <begin position="1"/>
        <end position="50"/>
    </location>
</feature>
<feature type="short sequence motif" description="GXGXXG" evidence="3">
    <location>
        <begin position="128"/>
        <end position="133"/>
    </location>
</feature>
<feature type="compositionally biased region" description="Polar residues" evidence="4">
    <location>
        <begin position="26"/>
        <end position="46"/>
    </location>
</feature>
<feature type="active site" description="Nucleophile" evidence="2">
    <location>
        <position position="168"/>
    </location>
</feature>
<feature type="splice variant" id="VSP_053857" description="In isoform 2." evidence="6">
    <original>I</original>
    <variation>IQ</variation>
    <location>
        <position position="420"/>
    </location>
</feature>
<proteinExistence type="evidence at protein level"/>
<comment type="function">
    <text evidence="1">Possesses non-specific lipolytic acyl hydrolase (LAH) activity. Hydrolyzes phospholipids as well as galactolipids. May play a role in disease resistance (By similarity).</text>
</comment>
<comment type="interaction">
    <interactant intactId="EBI-16967096">
        <id>Q8H133</id>
    </interactant>
    <interactant intactId="EBI-1645478">
        <id>Q38845</id>
        <label>PP2AA1</label>
    </interactant>
    <organismsDiffer>false</organismsDiffer>
    <experiments>3</experiments>
</comment>
<comment type="interaction">
    <interactant intactId="EBI-16967096">
        <id>Q8H133</id>
    </interactant>
    <interactant intactId="EBI-15192297">
        <id>Q9LQF0</id>
        <label>TCP23</label>
    </interactant>
    <organismsDiffer>false</organismsDiffer>
    <experiments>3</experiments>
</comment>
<comment type="alternative products">
    <event type="alternative splicing"/>
    <isoform>
        <id>Q8H133-1</id>
        <name>1</name>
        <sequence type="displayed"/>
    </isoform>
    <isoform>
        <id>Q8H133-2</id>
        <name>2</name>
        <sequence type="described" ref="VSP_053857"/>
    </isoform>
</comment>
<comment type="tissue specificity">
    <text evidence="5">Specifically expressed in roots.</text>
</comment>
<comment type="domain">
    <text evidence="1">The nitrogen atoms of the two glycine residues in the GGXR motif define the oxyanion hole, and stabilize the oxyanion that forms during the nucleophilic attack by the catalytic serine during substrate cleavage.</text>
</comment>
<comment type="miscellaneous">
    <molecule>Isoform 2</molecule>
    <text evidence="6">May be due to a competing acceptor splice site.</text>
</comment>
<comment type="similarity">
    <text evidence="6">Belongs to the patatin family.</text>
</comment>
<comment type="caution">
    <text evidence="6">Lacks the conserved Asp residue expected to act as the active site proton acceptor.</text>
</comment>
<comment type="sequence caution" evidence="6">
    <conflict type="miscellaneous discrepancy">
        <sequence resource="EMBL" id="BX828321"/>
    </conflict>
    <text>Sequencing errors.</text>
</comment>